<dbReference type="EC" id="3.4.11.18" evidence="2"/>
<dbReference type="EMBL" id="AAFW02000011">
    <property type="protein sequence ID" value="EDN64531.1"/>
    <property type="molecule type" value="Genomic_DNA"/>
</dbReference>
<dbReference type="SMR" id="A6ZKL2"/>
<dbReference type="HOGENOM" id="CLU_015857_7_1_1"/>
<dbReference type="Proteomes" id="UP000007060">
    <property type="component" value="Unassembled WGS sequence"/>
</dbReference>
<dbReference type="GO" id="GO:0005737">
    <property type="term" value="C:cytoplasm"/>
    <property type="evidence" value="ECO:0007669"/>
    <property type="project" value="UniProtKB-SubCell"/>
</dbReference>
<dbReference type="GO" id="GO:0004239">
    <property type="term" value="F:initiator methionyl aminopeptidase activity"/>
    <property type="evidence" value="ECO:0007669"/>
    <property type="project" value="UniProtKB-UniRule"/>
</dbReference>
<dbReference type="GO" id="GO:0046872">
    <property type="term" value="F:metal ion binding"/>
    <property type="evidence" value="ECO:0007669"/>
    <property type="project" value="UniProtKB-UniRule"/>
</dbReference>
<dbReference type="GO" id="GO:0070006">
    <property type="term" value="F:metalloaminopeptidase activity"/>
    <property type="evidence" value="ECO:0007669"/>
    <property type="project" value="UniProtKB-UniRule"/>
</dbReference>
<dbReference type="GO" id="GO:0006508">
    <property type="term" value="P:proteolysis"/>
    <property type="evidence" value="ECO:0007669"/>
    <property type="project" value="UniProtKB-KW"/>
</dbReference>
<dbReference type="CDD" id="cd01088">
    <property type="entry name" value="MetAP2"/>
    <property type="match status" value="1"/>
</dbReference>
<dbReference type="FunFam" id="1.10.10.10:FF:000370">
    <property type="entry name" value="Methionine aminopeptidase 2"/>
    <property type="match status" value="1"/>
</dbReference>
<dbReference type="Gene3D" id="3.90.230.10">
    <property type="entry name" value="Creatinase/methionine aminopeptidase superfamily"/>
    <property type="match status" value="1"/>
</dbReference>
<dbReference type="Gene3D" id="1.10.10.10">
    <property type="entry name" value="Winged helix-like DNA-binding domain superfamily/Winged helix DNA-binding domain"/>
    <property type="match status" value="1"/>
</dbReference>
<dbReference type="HAMAP" id="MF_03175">
    <property type="entry name" value="MetAP_2_euk"/>
    <property type="match status" value="1"/>
</dbReference>
<dbReference type="InterPro" id="IPR036005">
    <property type="entry name" value="Creatinase/aminopeptidase-like"/>
</dbReference>
<dbReference type="InterPro" id="IPR050247">
    <property type="entry name" value="Met_Aminopeptidase_Type2"/>
</dbReference>
<dbReference type="InterPro" id="IPR000994">
    <property type="entry name" value="Pept_M24"/>
</dbReference>
<dbReference type="InterPro" id="IPR001714">
    <property type="entry name" value="Pept_M24_MAP"/>
</dbReference>
<dbReference type="InterPro" id="IPR002468">
    <property type="entry name" value="Pept_M24A_MAP2"/>
</dbReference>
<dbReference type="InterPro" id="IPR018349">
    <property type="entry name" value="Pept_M24A_MAP2_BS"/>
</dbReference>
<dbReference type="InterPro" id="IPR036388">
    <property type="entry name" value="WH-like_DNA-bd_sf"/>
</dbReference>
<dbReference type="InterPro" id="IPR036390">
    <property type="entry name" value="WH_DNA-bd_sf"/>
</dbReference>
<dbReference type="NCBIfam" id="TIGR00501">
    <property type="entry name" value="met_pdase_II"/>
    <property type="match status" value="1"/>
</dbReference>
<dbReference type="PANTHER" id="PTHR45777">
    <property type="entry name" value="METHIONINE AMINOPEPTIDASE 2"/>
    <property type="match status" value="1"/>
</dbReference>
<dbReference type="PANTHER" id="PTHR45777:SF2">
    <property type="entry name" value="METHIONINE AMINOPEPTIDASE 2"/>
    <property type="match status" value="1"/>
</dbReference>
<dbReference type="Pfam" id="PF00557">
    <property type="entry name" value="Peptidase_M24"/>
    <property type="match status" value="1"/>
</dbReference>
<dbReference type="PRINTS" id="PR00599">
    <property type="entry name" value="MAPEPTIDASE"/>
</dbReference>
<dbReference type="SUPFAM" id="SSF55920">
    <property type="entry name" value="Creatinase/aminopeptidase"/>
    <property type="match status" value="1"/>
</dbReference>
<dbReference type="SUPFAM" id="SSF46785">
    <property type="entry name" value="Winged helix' DNA-binding domain"/>
    <property type="match status" value="1"/>
</dbReference>
<dbReference type="PROSITE" id="PS01202">
    <property type="entry name" value="MAP_2"/>
    <property type="match status" value="1"/>
</dbReference>
<proteinExistence type="inferred from homology"/>
<organism>
    <name type="scientific">Saccharomyces cerevisiae (strain YJM789)</name>
    <name type="common">Baker's yeast</name>
    <dbReference type="NCBI Taxonomy" id="307796"/>
    <lineage>
        <taxon>Eukaryota</taxon>
        <taxon>Fungi</taxon>
        <taxon>Dikarya</taxon>
        <taxon>Ascomycota</taxon>
        <taxon>Saccharomycotina</taxon>
        <taxon>Saccharomycetes</taxon>
        <taxon>Saccharomycetales</taxon>
        <taxon>Saccharomycetaceae</taxon>
        <taxon>Saccharomyces</taxon>
    </lineage>
</organism>
<evidence type="ECO:0000250" key="1">
    <source>
        <dbReference type="UniProtKB" id="P38174"/>
    </source>
</evidence>
<evidence type="ECO:0000255" key="2">
    <source>
        <dbReference type="HAMAP-Rule" id="MF_03175"/>
    </source>
</evidence>
<evidence type="ECO:0000256" key="3">
    <source>
        <dbReference type="SAM" id="MobiDB-lite"/>
    </source>
</evidence>
<accession>A6ZKL2</accession>
<feature type="chain" id="PRO_0000407678" description="Methionine aminopeptidase 2">
    <location>
        <begin position="1"/>
        <end position="421"/>
    </location>
</feature>
<feature type="region of interest" description="Disordered" evidence="3">
    <location>
        <begin position="1"/>
        <end position="53"/>
    </location>
</feature>
<feature type="compositionally biased region" description="Basic and acidic residues" evidence="3">
    <location>
        <begin position="28"/>
        <end position="40"/>
    </location>
</feature>
<feature type="compositionally biased region" description="Basic residues" evidence="3">
    <location>
        <begin position="41"/>
        <end position="53"/>
    </location>
</feature>
<feature type="binding site" evidence="2">
    <location>
        <position position="174"/>
    </location>
    <ligand>
        <name>substrate</name>
    </ligand>
</feature>
<feature type="binding site" evidence="2">
    <location>
        <position position="194"/>
    </location>
    <ligand>
        <name>a divalent metal cation</name>
        <dbReference type="ChEBI" id="CHEBI:60240"/>
        <label>1</label>
    </ligand>
</feature>
<feature type="binding site" evidence="2">
    <location>
        <position position="205"/>
    </location>
    <ligand>
        <name>a divalent metal cation</name>
        <dbReference type="ChEBI" id="CHEBI:60240"/>
        <label>1</label>
    </ligand>
</feature>
<feature type="binding site" evidence="2">
    <location>
        <position position="205"/>
    </location>
    <ligand>
        <name>a divalent metal cation</name>
        <dbReference type="ChEBI" id="CHEBI:60240"/>
        <label>2</label>
        <note>catalytic</note>
    </ligand>
</feature>
<feature type="binding site" evidence="2">
    <location>
        <position position="274"/>
    </location>
    <ligand>
        <name>a divalent metal cation</name>
        <dbReference type="ChEBI" id="CHEBI:60240"/>
        <label>2</label>
        <note>catalytic</note>
    </ligand>
</feature>
<feature type="binding site" evidence="2">
    <location>
        <position position="282"/>
    </location>
    <ligand>
        <name>substrate</name>
    </ligand>
</feature>
<feature type="binding site" evidence="2">
    <location>
        <position position="307"/>
    </location>
    <ligand>
        <name>a divalent metal cation</name>
        <dbReference type="ChEBI" id="CHEBI:60240"/>
        <label>2</label>
        <note>catalytic</note>
    </ligand>
</feature>
<feature type="binding site" evidence="2">
    <location>
        <position position="402"/>
    </location>
    <ligand>
        <name>a divalent metal cation</name>
        <dbReference type="ChEBI" id="CHEBI:60240"/>
        <label>1</label>
    </ligand>
</feature>
<feature type="binding site" evidence="2">
    <location>
        <position position="402"/>
    </location>
    <ligand>
        <name>a divalent metal cation</name>
        <dbReference type="ChEBI" id="CHEBI:60240"/>
        <label>2</label>
        <note>catalytic</note>
    </ligand>
</feature>
<feature type="modified residue" description="Phosphoserine" evidence="1">
    <location>
        <position position="35"/>
    </location>
</feature>
<protein>
    <recommendedName>
        <fullName evidence="2">Methionine aminopeptidase 2</fullName>
        <shortName evidence="2">MAP 2</shortName>
        <shortName evidence="2">MetAP 2</shortName>
        <ecNumber evidence="2">3.4.11.18</ecNumber>
    </recommendedName>
    <alternativeName>
        <fullName evidence="2">Peptidase M</fullName>
    </alternativeName>
</protein>
<sequence>MTDAEIENSPASDLKELNLENEGVEQQDQAKADESDPVESKKKKNKKKKKKKSNVKKIELLFPDGKYPEGAWMDYHQDFNLQRTTDEESRYLKRDLERAEHWNDVRKGAEIHRRVRRAIKDRIVPGMKLMDIADMIENTTRKYTGAENLLAMEDPKSQGIGFPTGLSLNHCAAHFTPNAGDKTVLKYEDVMKVDYGVQVNGNIIDSAFTVSFDPQYDNLLAAVKDATYTGIKEAGIDVRLTDIGEAIQEVMESYEVEINGETYQVKPCRNLCGHSIAPYRIHGGKSVPIVKNGDTTKMEEGEHFAIETFGSTGRGYVTAGGEVSHYARSAEDHQVMPTLDSAKNLLKTIDRNFGTLPFCRRYLDRLGQEKYLFALNNLVRHGLVQDYPPLNDIPGSYTAQFEHTILLHAHKKEVVSKGDDY</sequence>
<keyword id="KW-0031">Aminopeptidase</keyword>
<keyword id="KW-0963">Cytoplasm</keyword>
<keyword id="KW-0378">Hydrolase</keyword>
<keyword id="KW-0479">Metal-binding</keyword>
<keyword id="KW-0597">Phosphoprotein</keyword>
<keyword id="KW-0645">Protease</keyword>
<name>MAP2_YEAS7</name>
<reference key="1">
    <citation type="journal article" date="2007" name="Proc. Natl. Acad. Sci. U.S.A.">
        <title>Genome sequencing and comparative analysis of Saccharomyces cerevisiae strain YJM789.</title>
        <authorList>
            <person name="Wei W."/>
            <person name="McCusker J.H."/>
            <person name="Hyman R.W."/>
            <person name="Jones T."/>
            <person name="Ning Y."/>
            <person name="Cao Z."/>
            <person name="Gu Z."/>
            <person name="Bruno D."/>
            <person name="Miranda M."/>
            <person name="Nguyen M."/>
            <person name="Wilhelmy J."/>
            <person name="Komp C."/>
            <person name="Tamse R."/>
            <person name="Wang X."/>
            <person name="Jia P."/>
            <person name="Luedi P."/>
            <person name="Oefner P.J."/>
            <person name="David L."/>
            <person name="Dietrich F.S."/>
            <person name="Li Y."/>
            <person name="Davis R.W."/>
            <person name="Steinmetz L.M."/>
        </authorList>
    </citation>
    <scope>NUCLEOTIDE SEQUENCE [LARGE SCALE GENOMIC DNA]</scope>
    <source>
        <strain>YJM789</strain>
    </source>
</reference>
<comment type="function">
    <text evidence="2">Cotranslationally removes the N-terminal methionine from nascent proteins. The N-terminal methionine is often cleaved when the second residue in the primary sequence is small and uncharged (Met-Ala-, Cys, Gly, Pro, Ser, Thr, or Val).</text>
</comment>
<comment type="catalytic activity">
    <reaction evidence="2">
        <text>Release of N-terminal amino acids, preferentially methionine, from peptides and arylamides.</text>
        <dbReference type="EC" id="3.4.11.18"/>
    </reaction>
</comment>
<comment type="cofactor">
    <cofactor evidence="2">
        <name>Co(2+)</name>
        <dbReference type="ChEBI" id="CHEBI:48828"/>
    </cofactor>
    <cofactor evidence="2">
        <name>Zn(2+)</name>
        <dbReference type="ChEBI" id="CHEBI:29105"/>
    </cofactor>
    <cofactor evidence="2">
        <name>Mn(2+)</name>
        <dbReference type="ChEBI" id="CHEBI:29035"/>
    </cofactor>
    <cofactor evidence="2">
        <name>Fe(2+)</name>
        <dbReference type="ChEBI" id="CHEBI:29033"/>
    </cofactor>
    <text evidence="2">Binds 2 divalent metal cations per subunit. Has a high-affinity and a low affinity metal-binding site. The true nature of the physiological cofactor is under debate. The enzyme is active with cobalt, zinc, manganese or divalent iron ions. Most likely, methionine aminopeptidases function as mononuclear Fe(2+)-metalloproteases under physiological conditions, and the catalytically relevant metal-binding site has been assigned to the histidine-containing high-affinity site.</text>
</comment>
<comment type="subcellular location">
    <subcellularLocation>
        <location evidence="2">Cytoplasm</location>
    </subcellularLocation>
</comment>
<comment type="similarity">
    <text evidence="2">Belongs to the peptidase M24A family. Methionine aminopeptidase eukaryotic type 2 subfamily.</text>
</comment>
<gene>
    <name evidence="2" type="primary">MAP2</name>
    <name type="ORF">SCY_0132</name>
</gene>